<evidence type="ECO:0000255" key="1">
    <source>
        <dbReference type="HAMAP-Rule" id="MF_00612"/>
    </source>
</evidence>
<reference key="1">
    <citation type="journal article" date="2009" name="J. Bacteriol.">
        <title>Complete genome sequence and comparative genome analysis of enteropathogenic Escherichia coli O127:H6 strain E2348/69.</title>
        <authorList>
            <person name="Iguchi A."/>
            <person name="Thomson N.R."/>
            <person name="Ogura Y."/>
            <person name="Saunders D."/>
            <person name="Ooka T."/>
            <person name="Henderson I.R."/>
            <person name="Harris D."/>
            <person name="Asadulghani M."/>
            <person name="Kurokawa K."/>
            <person name="Dean P."/>
            <person name="Kenny B."/>
            <person name="Quail M.A."/>
            <person name="Thurston S."/>
            <person name="Dougan G."/>
            <person name="Hayashi T."/>
            <person name="Parkhill J."/>
            <person name="Frankel G."/>
        </authorList>
    </citation>
    <scope>NUCLEOTIDE SEQUENCE [LARGE SCALE GENOMIC DNA]</scope>
    <source>
        <strain>E2348/69 / EPEC</strain>
    </source>
</reference>
<protein>
    <recommendedName>
        <fullName evidence="1">UPF0225 protein YchJ</fullName>
    </recommendedName>
</protein>
<organism>
    <name type="scientific">Escherichia coli O127:H6 (strain E2348/69 / EPEC)</name>
    <dbReference type="NCBI Taxonomy" id="574521"/>
    <lineage>
        <taxon>Bacteria</taxon>
        <taxon>Pseudomonadati</taxon>
        <taxon>Pseudomonadota</taxon>
        <taxon>Gammaproteobacteria</taxon>
        <taxon>Enterobacterales</taxon>
        <taxon>Enterobacteriaceae</taxon>
        <taxon>Escherichia</taxon>
    </lineage>
</organism>
<proteinExistence type="inferred from homology"/>
<accession>B7UQC5</accession>
<gene>
    <name evidence="1" type="primary">ychJ</name>
    <name type="ordered locus">E2348C_1360</name>
</gene>
<feature type="chain" id="PRO_1000200398" description="UPF0225 protein YchJ">
    <location>
        <begin position="1"/>
        <end position="152"/>
    </location>
</feature>
<name>YCHJ_ECO27</name>
<comment type="similarity">
    <text evidence="1">Belongs to the UPF0225 family.</text>
</comment>
<sequence length="152" mass="16900">MSQLCPCGSAVEYSLCCHPYVSGEKVAPDPEHLMRSRYCAFVMQDADYLIKTWHPSCGAAALRAELIAGFAHTEWLGLTVFEHCWQDGGNIGFVSFVARFTEGGKTGAIIERSRFLKENGQWYYIDGTRPQFGRNDPCPCGSGKKFKKCCGQ</sequence>
<dbReference type="EMBL" id="FM180568">
    <property type="protein sequence ID" value="CAS08908.1"/>
    <property type="molecule type" value="Genomic_DNA"/>
</dbReference>
<dbReference type="RefSeq" id="WP_001362934.1">
    <property type="nucleotide sequence ID" value="NC_011601.1"/>
</dbReference>
<dbReference type="SMR" id="B7UQC5"/>
<dbReference type="KEGG" id="ecg:E2348C_1360"/>
<dbReference type="HOGENOM" id="CLU_099590_0_0_6"/>
<dbReference type="Proteomes" id="UP000008205">
    <property type="component" value="Chromosome"/>
</dbReference>
<dbReference type="Gene3D" id="3.10.450.50">
    <property type="match status" value="1"/>
</dbReference>
<dbReference type="HAMAP" id="MF_00612">
    <property type="entry name" value="UPF0225"/>
    <property type="match status" value="1"/>
</dbReference>
<dbReference type="InterPro" id="IPR032710">
    <property type="entry name" value="NTF2-like_dom_sf"/>
</dbReference>
<dbReference type="InterPro" id="IPR004027">
    <property type="entry name" value="SEC_C_motif"/>
</dbReference>
<dbReference type="InterPro" id="IPR023006">
    <property type="entry name" value="UPF0225"/>
</dbReference>
<dbReference type="InterPro" id="IPR048469">
    <property type="entry name" value="YchJ-like_M"/>
</dbReference>
<dbReference type="NCBIfam" id="NF002449">
    <property type="entry name" value="PRK01617.1"/>
    <property type="match status" value="1"/>
</dbReference>
<dbReference type="NCBIfam" id="NF002486">
    <property type="entry name" value="PRK01752.1"/>
    <property type="match status" value="1"/>
</dbReference>
<dbReference type="PANTHER" id="PTHR33747:SF1">
    <property type="entry name" value="ADENYLATE CYCLASE-ASSOCIATED CAP C-TERMINAL DOMAIN-CONTAINING PROTEIN"/>
    <property type="match status" value="1"/>
</dbReference>
<dbReference type="PANTHER" id="PTHR33747">
    <property type="entry name" value="UPF0225 PROTEIN SCO1677"/>
    <property type="match status" value="1"/>
</dbReference>
<dbReference type="Pfam" id="PF02810">
    <property type="entry name" value="SEC-C"/>
    <property type="match status" value="2"/>
</dbReference>
<dbReference type="Pfam" id="PF17775">
    <property type="entry name" value="YchJ_M-like"/>
    <property type="match status" value="1"/>
</dbReference>
<dbReference type="SUPFAM" id="SSF54427">
    <property type="entry name" value="NTF2-like"/>
    <property type="match status" value="1"/>
</dbReference>
<dbReference type="SUPFAM" id="SSF103642">
    <property type="entry name" value="Sec-C motif"/>
    <property type="match status" value="1"/>
</dbReference>
<keyword id="KW-1185">Reference proteome</keyword>